<dbReference type="EMBL" id="DQ489311">
    <property type="protein sequence ID" value="ABF66344.1"/>
    <property type="molecule type" value="Genomic_RNA"/>
</dbReference>
<dbReference type="GlyCosmos" id="A0MD32">
    <property type="glycosylation" value="8 sites, No reported glycans"/>
</dbReference>
<dbReference type="Proteomes" id="UP000000937">
    <property type="component" value="Genome"/>
</dbReference>
<dbReference type="GO" id="GO:0005576">
    <property type="term" value="C:extracellular region"/>
    <property type="evidence" value="ECO:0007669"/>
    <property type="project" value="UniProtKB-SubCell"/>
</dbReference>
<dbReference type="GO" id="GO:0044167">
    <property type="term" value="C:host cell endoplasmic reticulum membrane"/>
    <property type="evidence" value="ECO:0007669"/>
    <property type="project" value="UniProtKB-SubCell"/>
</dbReference>
<dbReference type="GO" id="GO:0044178">
    <property type="term" value="C:host cell Golgi membrane"/>
    <property type="evidence" value="ECO:0007669"/>
    <property type="project" value="UniProtKB-SubCell"/>
</dbReference>
<dbReference type="GO" id="GO:0016020">
    <property type="term" value="C:membrane"/>
    <property type="evidence" value="ECO:0007669"/>
    <property type="project" value="UniProtKB-KW"/>
</dbReference>
<dbReference type="GO" id="GO:0019031">
    <property type="term" value="C:viral envelope"/>
    <property type="evidence" value="ECO:0007669"/>
    <property type="project" value="UniProtKB-KW"/>
</dbReference>
<dbReference type="GO" id="GO:0055036">
    <property type="term" value="C:virion membrane"/>
    <property type="evidence" value="ECO:0007669"/>
    <property type="project" value="UniProtKB-SubCell"/>
</dbReference>
<dbReference type="InterPro" id="IPR002556">
    <property type="entry name" value="Arteri_GP3"/>
</dbReference>
<dbReference type="Pfam" id="PF01606">
    <property type="entry name" value="Arteri_env"/>
    <property type="match status" value="1"/>
</dbReference>
<sequence length="265" mass="30647">MAHQCACFHFFLCGFICYLVHSALAANSSSTLCFWFPLAHGNTSFELTINYTICMPCLTSQAARQRLEPGRNMWCRIGHDRCEERDHDELLMSIPSGYDNLKLEGYYAWLAFLSFSYAAQFHPELFGIGNVSRVFVDKRHQFICAEHGGLNSTLSTEHNISALYAVYYHHQIDGGNWFHLEWLRPLFSSWLVLNISWFLRRSPVSPVSRRIYQILRPTRPRLPVSWSFRTSIVPGLTRPQQRKVKFPPESRPNAVKPSVFPNTSR</sequence>
<feature type="chain" id="PRO_0000410891" description="Glycoprotein 3">
    <location>
        <begin position="1"/>
        <end position="265"/>
    </location>
</feature>
<feature type="transmembrane region" description="Helical" evidence="2">
    <location>
        <begin position="6"/>
        <end position="26"/>
    </location>
</feature>
<feature type="region of interest" description="Disordered" evidence="3">
    <location>
        <begin position="241"/>
        <end position="265"/>
    </location>
</feature>
<feature type="glycosylation site" description="N-linked (GlcNAc...) asparagine; by host" evidence="2">
    <location>
        <position position="27"/>
    </location>
</feature>
<feature type="glycosylation site" description="N-linked (GlcNAc...) asparagine; by host" evidence="2">
    <location>
        <position position="42"/>
    </location>
</feature>
<feature type="glycosylation site" description="N-linked (GlcNAc...) asparagine; by host" evidence="2">
    <location>
        <position position="50"/>
    </location>
</feature>
<feature type="glycosylation site" description="N-linked (GlcNAc...) asparagine; by host" evidence="2">
    <location>
        <position position="130"/>
    </location>
</feature>
<feature type="glycosylation site" description="N-linked (GlcNAc...) asparagine; by host" evidence="2">
    <location>
        <position position="151"/>
    </location>
</feature>
<feature type="glycosylation site" description="N-linked (GlcNAc...) asparagine; by host" evidence="2">
    <location>
        <position position="159"/>
    </location>
</feature>
<feature type="glycosylation site" description="N-linked (GlcNAc...) asparagine; by host" evidence="2">
    <location>
        <position position="194"/>
    </location>
</feature>
<feature type="glycosylation site" description="N-linked (GlcNAc...) asparagine; by host" evidence="2">
    <location>
        <position position="262"/>
    </location>
</feature>
<accession>A0MD32</accession>
<keyword id="KW-0325">Glycoprotein</keyword>
<keyword id="KW-1038">Host endoplasmic reticulum</keyword>
<keyword id="KW-1040">Host Golgi apparatus</keyword>
<keyword id="KW-1043">Host membrane</keyword>
<keyword id="KW-0472">Membrane</keyword>
<keyword id="KW-0964">Secreted</keyword>
<keyword id="KW-0812">Transmembrane</keyword>
<keyword id="KW-1133">Transmembrane helix</keyword>
<keyword id="KW-0261">Viral envelope protein</keyword>
<keyword id="KW-0946">Virion</keyword>
<organismHost>
    <name type="scientific">Sus scrofa</name>
    <name type="common">Pig</name>
    <dbReference type="NCBI Taxonomy" id="9823"/>
</organismHost>
<evidence type="ECO:0000250" key="1"/>
<evidence type="ECO:0000255" key="2"/>
<evidence type="ECO:0000256" key="3">
    <source>
        <dbReference type="SAM" id="MobiDB-lite"/>
    </source>
</evidence>
<evidence type="ECO:0000305" key="4"/>
<name>GP3_PRRSS</name>
<organism>
    <name type="scientific">Porcine reproductive and respiratory syndrome virus (isolate Pig/United States/SD 01-08/2001)</name>
    <name type="common">PRRSV</name>
    <dbReference type="NCBI Taxonomy" id="857306"/>
    <lineage>
        <taxon>Viruses</taxon>
        <taxon>Riboviria</taxon>
        <taxon>Orthornavirae</taxon>
        <taxon>Pisuviricota</taxon>
        <taxon>Pisoniviricetes</taxon>
        <taxon>Nidovirales</taxon>
        <taxon>Arnidovirineae</taxon>
        <taxon>Arteriviridae</taxon>
        <taxon>Variarterivirinae</taxon>
        <taxon>Betaarterivirus</taxon>
        <taxon>Ampobartevirus</taxon>
        <taxon>Betaarterivirus americense</taxon>
    </lineage>
</organism>
<protein>
    <recommendedName>
        <fullName>Glycoprotein 3</fullName>
        <shortName>Protein GP3</shortName>
    </recommendedName>
</protein>
<gene>
    <name type="primary">GP3</name>
    <name type="ORF">3</name>
</gene>
<comment type="function">
    <text evidence="1">Minor envelope protein.</text>
</comment>
<comment type="subunit">
    <text evidence="1 4">Heterotrimer of GP2a, GP3, and GP4 (By similarity). The GP2a-GP3-GP4 complex associates with the E protein (Probable).</text>
</comment>
<comment type="subcellular location">
    <subcellularLocation>
        <location evidence="1">Virion membrane</location>
        <topology evidence="1">Single-pass type I membrane protein</topology>
    </subcellularLocation>
    <subcellularLocation>
        <location evidence="1">Host endoplasmic reticulum membrane</location>
        <topology evidence="1">Single-pass type I membrane protein</topology>
    </subcellularLocation>
    <subcellularLocation>
        <location evidence="1">Host Golgi apparatus membrane</location>
        <topology evidence="1">Single-pass type I membrane protein</topology>
    </subcellularLocation>
    <subcellularLocation>
        <location evidence="1">Secreted</location>
    </subcellularLocation>
    <text evidence="1">Only a small fraction of GP3 synthesized in infected cells ends up in virions. The transmembrane region probably functions as an uncleaved signal (By similarity).</text>
</comment>
<comment type="similarity">
    <text evidence="4">Belongs to the arteriviridae GP3 protein family.</text>
</comment>
<reference key="1">
    <citation type="journal article" date="2006" name="Adv. Exp. Med. Biol.">
        <title>Construction of a full-length cDNA infectious clone of a European-like Type 1 PRRSV isolated in the U.S.</title>
        <authorList>
            <person name="Fang Y."/>
            <person name="Faaberg K.S."/>
            <person name="Rowland R.R."/>
            <person name="Christopher-Hennings J."/>
            <person name="Pattnaik A.K."/>
            <person name="Osorio F."/>
            <person name="Nelson E.A."/>
        </authorList>
    </citation>
    <scope>NUCLEOTIDE SEQUENCE [GENOMIC RNA]</scope>
    <source>
        <strain>Infectious clone SD 01-08</strain>
    </source>
</reference>
<proteinExistence type="inferred from homology"/>